<comment type="alternative products">
    <event type="alternative splicing"/>
    <isoform>
        <id>Q8BGN2-1</id>
        <name>1</name>
        <sequence type="displayed"/>
    </isoform>
    <isoform>
        <id>Q8BGN2-2</id>
        <name>2</name>
        <sequence type="described" ref="VSP_027013"/>
    </isoform>
</comment>
<comment type="similarity">
    <text evidence="3">Belongs to the UPF0462 family.</text>
</comment>
<dbReference type="EMBL" id="AK012700">
    <property type="protein sequence ID" value="BAB28420.1"/>
    <property type="molecule type" value="mRNA"/>
</dbReference>
<dbReference type="EMBL" id="AK015146">
    <property type="protein sequence ID" value="BAB29724.1"/>
    <property type="molecule type" value="mRNA"/>
</dbReference>
<dbReference type="EMBL" id="AK044548">
    <property type="protein sequence ID" value="BAC31974.1"/>
    <property type="molecule type" value="mRNA"/>
</dbReference>
<dbReference type="EMBL" id="AK045813">
    <property type="protein sequence ID" value="BAC32501.1"/>
    <property type="molecule type" value="mRNA"/>
</dbReference>
<dbReference type="EMBL" id="AK085404">
    <property type="protein sequence ID" value="BAC39441.1"/>
    <property type="molecule type" value="mRNA"/>
</dbReference>
<dbReference type="EMBL" id="BC062244">
    <property type="protein sequence ID" value="AAH62244.1"/>
    <property type="molecule type" value="mRNA"/>
</dbReference>
<dbReference type="CCDS" id="CCDS17332.1">
    <molecule id="Q8BGN2-1"/>
</dbReference>
<dbReference type="CCDS" id="CCDS50900.1">
    <molecule id="Q8BGN2-2"/>
</dbReference>
<dbReference type="RefSeq" id="NP_001093255.1">
    <molecule id="Q8BGN2-1"/>
    <property type="nucleotide sequence ID" value="NM_001099785.1"/>
</dbReference>
<dbReference type="RefSeq" id="NP_001277977.1">
    <property type="nucleotide sequence ID" value="NM_001291048.1"/>
</dbReference>
<dbReference type="RefSeq" id="NP_081547.1">
    <molecule id="Q8BGN2-2"/>
    <property type="nucleotide sequence ID" value="NM_027271.1"/>
</dbReference>
<dbReference type="RefSeq" id="NP_082943.2">
    <molecule id="Q8BGN2-1"/>
    <property type="nucleotide sequence ID" value="NM_028667.3"/>
</dbReference>
<dbReference type="SMR" id="Q8BGN2"/>
<dbReference type="FunCoup" id="Q8BGN2">
    <property type="interactions" value="55"/>
</dbReference>
<dbReference type="PhosphoSitePlus" id="Q8BGN2"/>
<dbReference type="PaxDb" id="10090-ENSMUSP00000119049"/>
<dbReference type="PeptideAtlas" id="Q8BGN2"/>
<dbReference type="ProteomicsDB" id="283737">
    <molecule id="Q8BGN2-1"/>
</dbReference>
<dbReference type="ProteomicsDB" id="283738">
    <molecule id="Q8BGN2-2"/>
</dbReference>
<dbReference type="Pumba" id="Q8BGN2"/>
<dbReference type="Antibodypedia" id="27038">
    <property type="antibodies" value="79 antibodies from 18 providers"/>
</dbReference>
<dbReference type="DNASU" id="73852"/>
<dbReference type="Ensembl" id="ENSMUST00000026867.14">
    <molecule id="Q8BGN2-2"/>
    <property type="protein sequence ID" value="ENSMUSP00000026867.8"/>
    <property type="gene ID" value="ENSMUSG00000025766.15"/>
</dbReference>
<dbReference type="Ensembl" id="ENSMUST00000108065.9">
    <molecule id="Q8BGN2-1"/>
    <property type="protein sequence ID" value="ENSMUSP00000103700.3"/>
    <property type="gene ID" value="ENSMUSG00000025766.15"/>
</dbReference>
<dbReference type="Ensembl" id="ENSMUST00000146165.8">
    <molecule id="Q8BGN2-1"/>
    <property type="protein sequence ID" value="ENSMUSP00000119049.2"/>
    <property type="gene ID" value="ENSMUSG00000025766.15"/>
</dbReference>
<dbReference type="Ensembl" id="ENSMUST00000192193.6">
    <molecule id="Q8BGN2-2"/>
    <property type="protein sequence ID" value="ENSMUSP00000142092.2"/>
    <property type="gene ID" value="ENSMUSG00000025766.15"/>
</dbReference>
<dbReference type="Ensembl" id="ENSMUST00000194346.6">
    <molecule id="Q8BGN2-1"/>
    <property type="protein sequence ID" value="ENSMUSP00000141925.2"/>
    <property type="gene ID" value="ENSMUSG00000025766.15"/>
</dbReference>
<dbReference type="Ensembl" id="ENSMUST00000195882.6">
    <molecule id="Q8BGN2-1"/>
    <property type="protein sequence ID" value="ENSMUSP00000142037.2"/>
    <property type="gene ID" value="ENSMUSG00000025766.15"/>
</dbReference>
<dbReference type="GeneID" id="73852"/>
<dbReference type="KEGG" id="mmu:73852"/>
<dbReference type="UCSC" id="uc008pcr.1">
    <molecule id="Q8BGN2-1"/>
    <property type="organism name" value="mouse"/>
</dbReference>
<dbReference type="UCSC" id="uc008pct.1">
    <molecule id="Q8BGN2-2"/>
    <property type="organism name" value="mouse"/>
</dbReference>
<dbReference type="AGR" id="MGI:1289213"/>
<dbReference type="CTD" id="73852"/>
<dbReference type="MGI" id="MGI:1289213">
    <property type="gene designation" value="D3Ertd751e"/>
</dbReference>
<dbReference type="VEuPathDB" id="HostDB:ENSMUSG00000025766"/>
<dbReference type="eggNOG" id="ENOG502R3ZD">
    <property type="taxonomic scope" value="Eukaryota"/>
</dbReference>
<dbReference type="GeneTree" id="ENSGT00390000006284"/>
<dbReference type="HOGENOM" id="CLU_075391_1_0_1"/>
<dbReference type="InParanoid" id="Q8BGN2"/>
<dbReference type="OMA" id="TIFGEEW"/>
<dbReference type="OrthoDB" id="10056816at2759"/>
<dbReference type="PhylomeDB" id="Q8BGN2"/>
<dbReference type="TreeFam" id="TF313077"/>
<dbReference type="BioGRID-ORCS" id="73852">
    <property type="hits" value="1 hit in 76 CRISPR screens"/>
</dbReference>
<dbReference type="ChiTaRS" id="D3Ertd751e">
    <property type="organism name" value="mouse"/>
</dbReference>
<dbReference type="PRO" id="PR:Q8BGN2"/>
<dbReference type="Proteomes" id="UP000000589">
    <property type="component" value="Chromosome 3"/>
</dbReference>
<dbReference type="RNAct" id="Q8BGN2">
    <property type="molecule type" value="protein"/>
</dbReference>
<dbReference type="Bgee" id="ENSMUSG00000025766">
    <property type="expression patterns" value="Expressed in embryonic post-anal tail and 215 other cell types or tissues"/>
</dbReference>
<dbReference type="ExpressionAtlas" id="Q8BGN2">
    <property type="expression patterns" value="baseline and differential"/>
</dbReference>
<dbReference type="Gene3D" id="2.60.40.1190">
    <property type="match status" value="1"/>
</dbReference>
<dbReference type="PANTHER" id="PTHR31475">
    <property type="entry name" value="UPF0462 PROTEIN"/>
    <property type="match status" value="1"/>
</dbReference>
<dbReference type="PANTHER" id="PTHR31475:SF3">
    <property type="entry name" value="UPF0462 PROTEIN C4ORF33"/>
    <property type="match status" value="1"/>
</dbReference>
<reference key="1">
    <citation type="journal article" date="2005" name="Science">
        <title>The transcriptional landscape of the mammalian genome.</title>
        <authorList>
            <person name="Carninci P."/>
            <person name="Kasukawa T."/>
            <person name="Katayama S."/>
            <person name="Gough J."/>
            <person name="Frith M.C."/>
            <person name="Maeda N."/>
            <person name="Oyama R."/>
            <person name="Ravasi T."/>
            <person name="Lenhard B."/>
            <person name="Wells C."/>
            <person name="Kodzius R."/>
            <person name="Shimokawa K."/>
            <person name="Bajic V.B."/>
            <person name="Brenner S.E."/>
            <person name="Batalov S."/>
            <person name="Forrest A.R."/>
            <person name="Zavolan M."/>
            <person name="Davis M.J."/>
            <person name="Wilming L.G."/>
            <person name="Aidinis V."/>
            <person name="Allen J.E."/>
            <person name="Ambesi-Impiombato A."/>
            <person name="Apweiler R."/>
            <person name="Aturaliya R.N."/>
            <person name="Bailey T.L."/>
            <person name="Bansal M."/>
            <person name="Baxter L."/>
            <person name="Beisel K.W."/>
            <person name="Bersano T."/>
            <person name="Bono H."/>
            <person name="Chalk A.M."/>
            <person name="Chiu K.P."/>
            <person name="Choudhary V."/>
            <person name="Christoffels A."/>
            <person name="Clutterbuck D.R."/>
            <person name="Crowe M.L."/>
            <person name="Dalla E."/>
            <person name="Dalrymple B.P."/>
            <person name="de Bono B."/>
            <person name="Della Gatta G."/>
            <person name="di Bernardo D."/>
            <person name="Down T."/>
            <person name="Engstrom P."/>
            <person name="Fagiolini M."/>
            <person name="Faulkner G."/>
            <person name="Fletcher C.F."/>
            <person name="Fukushima T."/>
            <person name="Furuno M."/>
            <person name="Futaki S."/>
            <person name="Gariboldi M."/>
            <person name="Georgii-Hemming P."/>
            <person name="Gingeras T.R."/>
            <person name="Gojobori T."/>
            <person name="Green R.E."/>
            <person name="Gustincich S."/>
            <person name="Harbers M."/>
            <person name="Hayashi Y."/>
            <person name="Hensch T.K."/>
            <person name="Hirokawa N."/>
            <person name="Hill D."/>
            <person name="Huminiecki L."/>
            <person name="Iacono M."/>
            <person name="Ikeo K."/>
            <person name="Iwama A."/>
            <person name="Ishikawa T."/>
            <person name="Jakt M."/>
            <person name="Kanapin A."/>
            <person name="Katoh M."/>
            <person name="Kawasawa Y."/>
            <person name="Kelso J."/>
            <person name="Kitamura H."/>
            <person name="Kitano H."/>
            <person name="Kollias G."/>
            <person name="Krishnan S.P."/>
            <person name="Kruger A."/>
            <person name="Kummerfeld S.K."/>
            <person name="Kurochkin I.V."/>
            <person name="Lareau L.F."/>
            <person name="Lazarevic D."/>
            <person name="Lipovich L."/>
            <person name="Liu J."/>
            <person name="Liuni S."/>
            <person name="McWilliam S."/>
            <person name="Madan Babu M."/>
            <person name="Madera M."/>
            <person name="Marchionni L."/>
            <person name="Matsuda H."/>
            <person name="Matsuzawa S."/>
            <person name="Miki H."/>
            <person name="Mignone F."/>
            <person name="Miyake S."/>
            <person name="Morris K."/>
            <person name="Mottagui-Tabar S."/>
            <person name="Mulder N."/>
            <person name="Nakano N."/>
            <person name="Nakauchi H."/>
            <person name="Ng P."/>
            <person name="Nilsson R."/>
            <person name="Nishiguchi S."/>
            <person name="Nishikawa S."/>
            <person name="Nori F."/>
            <person name="Ohara O."/>
            <person name="Okazaki Y."/>
            <person name="Orlando V."/>
            <person name="Pang K.C."/>
            <person name="Pavan W.J."/>
            <person name="Pavesi G."/>
            <person name="Pesole G."/>
            <person name="Petrovsky N."/>
            <person name="Piazza S."/>
            <person name="Reed J."/>
            <person name="Reid J.F."/>
            <person name="Ring B.Z."/>
            <person name="Ringwald M."/>
            <person name="Rost B."/>
            <person name="Ruan Y."/>
            <person name="Salzberg S.L."/>
            <person name="Sandelin A."/>
            <person name="Schneider C."/>
            <person name="Schoenbach C."/>
            <person name="Sekiguchi K."/>
            <person name="Semple C.A."/>
            <person name="Seno S."/>
            <person name="Sessa L."/>
            <person name="Sheng Y."/>
            <person name="Shibata Y."/>
            <person name="Shimada H."/>
            <person name="Shimada K."/>
            <person name="Silva D."/>
            <person name="Sinclair B."/>
            <person name="Sperling S."/>
            <person name="Stupka E."/>
            <person name="Sugiura K."/>
            <person name="Sultana R."/>
            <person name="Takenaka Y."/>
            <person name="Taki K."/>
            <person name="Tammoja K."/>
            <person name="Tan S.L."/>
            <person name="Tang S."/>
            <person name="Taylor M.S."/>
            <person name="Tegner J."/>
            <person name="Teichmann S.A."/>
            <person name="Ueda H.R."/>
            <person name="van Nimwegen E."/>
            <person name="Verardo R."/>
            <person name="Wei C.L."/>
            <person name="Yagi K."/>
            <person name="Yamanishi H."/>
            <person name="Zabarovsky E."/>
            <person name="Zhu S."/>
            <person name="Zimmer A."/>
            <person name="Hide W."/>
            <person name="Bult C."/>
            <person name="Grimmond S.M."/>
            <person name="Teasdale R.D."/>
            <person name="Liu E.T."/>
            <person name="Brusic V."/>
            <person name="Quackenbush J."/>
            <person name="Wahlestedt C."/>
            <person name="Mattick J.S."/>
            <person name="Hume D.A."/>
            <person name="Kai C."/>
            <person name="Sasaki D."/>
            <person name="Tomaru Y."/>
            <person name="Fukuda S."/>
            <person name="Kanamori-Katayama M."/>
            <person name="Suzuki M."/>
            <person name="Aoki J."/>
            <person name="Arakawa T."/>
            <person name="Iida J."/>
            <person name="Imamura K."/>
            <person name="Itoh M."/>
            <person name="Kato T."/>
            <person name="Kawaji H."/>
            <person name="Kawagashira N."/>
            <person name="Kawashima T."/>
            <person name="Kojima M."/>
            <person name="Kondo S."/>
            <person name="Konno H."/>
            <person name="Nakano K."/>
            <person name="Ninomiya N."/>
            <person name="Nishio T."/>
            <person name="Okada M."/>
            <person name="Plessy C."/>
            <person name="Shibata K."/>
            <person name="Shiraki T."/>
            <person name="Suzuki S."/>
            <person name="Tagami M."/>
            <person name="Waki K."/>
            <person name="Watahiki A."/>
            <person name="Okamura-Oho Y."/>
            <person name="Suzuki H."/>
            <person name="Kawai J."/>
            <person name="Hayashizaki Y."/>
        </authorList>
    </citation>
    <scope>NUCLEOTIDE SEQUENCE [LARGE SCALE MRNA] (ISOFORMS 1 AND 2)</scope>
    <source>
        <strain>C57BL/6J</strain>
        <tissue>Corpora quadrigemina</tissue>
        <tissue>Kidney</tissue>
        <tissue>Retina</tissue>
        <tissue>Testis</tissue>
    </source>
</reference>
<reference key="2">
    <citation type="journal article" date="2004" name="Genome Res.">
        <title>The status, quality, and expansion of the NIH full-length cDNA project: the Mammalian Gene Collection (MGC).</title>
        <authorList>
            <consortium name="The MGC Project Team"/>
        </authorList>
    </citation>
    <scope>NUCLEOTIDE SEQUENCE [LARGE SCALE MRNA] (ISOFORM 2)</scope>
    <source>
        <strain>C57BL/6J</strain>
        <tissue>Thymus</tissue>
    </source>
</reference>
<gene>
    <name type="primary">D3Ertd751e</name>
</gene>
<feature type="chain" id="PRO_0000295715" description="UPF0462 protein C4orf33 homolog">
    <location>
        <begin position="1"/>
        <end position="192"/>
    </location>
</feature>
<feature type="splice variant" id="VSP_027013" description="In isoform 2." evidence="1 2">
    <location>
        <begin position="82"/>
        <end position="165"/>
    </location>
</feature>
<feature type="sequence conflict" description="In Ref. 1; BAB29724." evidence="3" ref="1">
    <original>S</original>
    <variation>I</variation>
    <location>
        <position position="175"/>
    </location>
</feature>
<feature type="sequence conflict" description="In Ref. 1; BAB28420." evidence="3" ref="1">
    <original>W</original>
    <variation>C</variation>
    <location>
        <position position="192"/>
    </location>
</feature>
<name>CD033_MOUSE</name>
<protein>
    <recommendedName>
        <fullName>UPF0462 protein C4orf33 homolog</fullName>
    </recommendedName>
</protein>
<proteinExistence type="evidence at transcript level"/>
<sequence>MDFKIEYTWDGFPVRHEPVCVRLSPCEQGVKMEVSAPLFNDPPSPLGEPGKPFSELWNYEVVEAFFLNDTTKQYLEVELCPHGQHLVLLLAGRRNVWKKELPLSFKASRGGTNWEGEAYIPWSYFPPNVTKFNSFAIHGSNDRRVYEALYPVPQHELQQGQKPDFHRLEYFKPFSFNTLLGEEWRQPEPDLW</sequence>
<accession>Q8BGN2</accession>
<accession>Q8C8S9</accession>
<accession>Q9CZE4</accession>
<accession>Q9D5M7</accession>
<organism>
    <name type="scientific">Mus musculus</name>
    <name type="common">Mouse</name>
    <dbReference type="NCBI Taxonomy" id="10090"/>
    <lineage>
        <taxon>Eukaryota</taxon>
        <taxon>Metazoa</taxon>
        <taxon>Chordata</taxon>
        <taxon>Craniata</taxon>
        <taxon>Vertebrata</taxon>
        <taxon>Euteleostomi</taxon>
        <taxon>Mammalia</taxon>
        <taxon>Eutheria</taxon>
        <taxon>Euarchontoglires</taxon>
        <taxon>Glires</taxon>
        <taxon>Rodentia</taxon>
        <taxon>Myomorpha</taxon>
        <taxon>Muroidea</taxon>
        <taxon>Muridae</taxon>
        <taxon>Murinae</taxon>
        <taxon>Mus</taxon>
        <taxon>Mus</taxon>
    </lineage>
</organism>
<evidence type="ECO:0000303" key="1">
    <source>
    </source>
</evidence>
<evidence type="ECO:0000303" key="2">
    <source>
    </source>
</evidence>
<evidence type="ECO:0000305" key="3"/>
<keyword id="KW-0025">Alternative splicing</keyword>
<keyword id="KW-1185">Reference proteome</keyword>